<dbReference type="EC" id="2.8.1.10" evidence="1"/>
<dbReference type="EMBL" id="AE017194">
    <property type="protein sequence ID" value="AAS39734.1"/>
    <property type="molecule type" value="Genomic_DNA"/>
</dbReference>
<dbReference type="SMR" id="Q73DB1"/>
<dbReference type="KEGG" id="bca:BCE_0802"/>
<dbReference type="HOGENOM" id="CLU_062233_1_0_9"/>
<dbReference type="UniPathway" id="UPA00060"/>
<dbReference type="Proteomes" id="UP000002527">
    <property type="component" value="Chromosome"/>
</dbReference>
<dbReference type="GO" id="GO:0005737">
    <property type="term" value="C:cytoplasm"/>
    <property type="evidence" value="ECO:0007669"/>
    <property type="project" value="UniProtKB-SubCell"/>
</dbReference>
<dbReference type="GO" id="GO:1990107">
    <property type="term" value="F:thiazole synthase activity"/>
    <property type="evidence" value="ECO:0007669"/>
    <property type="project" value="UniProtKB-EC"/>
</dbReference>
<dbReference type="GO" id="GO:0009229">
    <property type="term" value="P:thiamine diphosphate biosynthetic process"/>
    <property type="evidence" value="ECO:0007669"/>
    <property type="project" value="UniProtKB-UniRule"/>
</dbReference>
<dbReference type="CDD" id="cd04728">
    <property type="entry name" value="ThiG"/>
    <property type="match status" value="1"/>
</dbReference>
<dbReference type="FunFam" id="3.20.20.70:FF:000049">
    <property type="entry name" value="Thiazole synthase"/>
    <property type="match status" value="1"/>
</dbReference>
<dbReference type="Gene3D" id="3.20.20.70">
    <property type="entry name" value="Aldolase class I"/>
    <property type="match status" value="1"/>
</dbReference>
<dbReference type="HAMAP" id="MF_00443">
    <property type="entry name" value="ThiG"/>
    <property type="match status" value="1"/>
</dbReference>
<dbReference type="InterPro" id="IPR013785">
    <property type="entry name" value="Aldolase_TIM"/>
</dbReference>
<dbReference type="InterPro" id="IPR033983">
    <property type="entry name" value="Thiazole_synthase_ThiG"/>
</dbReference>
<dbReference type="InterPro" id="IPR008867">
    <property type="entry name" value="ThiG"/>
</dbReference>
<dbReference type="PANTHER" id="PTHR34266">
    <property type="entry name" value="THIAZOLE SYNTHASE"/>
    <property type="match status" value="1"/>
</dbReference>
<dbReference type="PANTHER" id="PTHR34266:SF2">
    <property type="entry name" value="THIAZOLE SYNTHASE"/>
    <property type="match status" value="1"/>
</dbReference>
<dbReference type="Pfam" id="PF05690">
    <property type="entry name" value="ThiG"/>
    <property type="match status" value="1"/>
</dbReference>
<dbReference type="SUPFAM" id="SSF110399">
    <property type="entry name" value="ThiG-like"/>
    <property type="match status" value="1"/>
</dbReference>
<protein>
    <recommendedName>
        <fullName evidence="1">Thiazole synthase</fullName>
        <ecNumber evidence="1">2.8.1.10</ecNumber>
    </recommendedName>
</protein>
<accession>Q73DB1</accession>
<name>THIG_BACC1</name>
<gene>
    <name evidence="1" type="primary">thiG</name>
    <name type="ordered locus">BCE_0802</name>
</gene>
<comment type="function">
    <text evidence="1">Catalyzes the rearrangement of 1-deoxy-D-xylulose 5-phosphate (DXP) to produce the thiazole phosphate moiety of thiamine. Sulfur is provided by the thiocarboxylate moiety of the carrier protein ThiS. In vitro, sulfur can be provided by H(2)S.</text>
</comment>
<comment type="catalytic activity">
    <reaction evidence="1">
        <text>[ThiS sulfur-carrier protein]-C-terminal-Gly-aminoethanethioate + 2-iminoacetate + 1-deoxy-D-xylulose 5-phosphate = [ThiS sulfur-carrier protein]-C-terminal Gly-Gly + 2-[(2R,5Z)-2-carboxy-4-methylthiazol-5(2H)-ylidene]ethyl phosphate + 2 H2O + H(+)</text>
        <dbReference type="Rhea" id="RHEA:26297"/>
        <dbReference type="Rhea" id="RHEA-COMP:12909"/>
        <dbReference type="Rhea" id="RHEA-COMP:19908"/>
        <dbReference type="ChEBI" id="CHEBI:15377"/>
        <dbReference type="ChEBI" id="CHEBI:15378"/>
        <dbReference type="ChEBI" id="CHEBI:57792"/>
        <dbReference type="ChEBI" id="CHEBI:62899"/>
        <dbReference type="ChEBI" id="CHEBI:77846"/>
        <dbReference type="ChEBI" id="CHEBI:90778"/>
        <dbReference type="ChEBI" id="CHEBI:232372"/>
        <dbReference type="EC" id="2.8.1.10"/>
    </reaction>
</comment>
<comment type="pathway">
    <text evidence="1">Cofactor biosynthesis; thiamine diphosphate biosynthesis.</text>
</comment>
<comment type="subunit">
    <text evidence="1">Homotetramer. Forms heterodimers with either ThiH or ThiS.</text>
</comment>
<comment type="subcellular location">
    <subcellularLocation>
        <location evidence="1">Cytoplasm</location>
    </subcellularLocation>
</comment>
<comment type="similarity">
    <text evidence="1">Belongs to the ThiG family.</text>
</comment>
<reference key="1">
    <citation type="journal article" date="2004" name="Nucleic Acids Res.">
        <title>The genome sequence of Bacillus cereus ATCC 10987 reveals metabolic adaptations and a large plasmid related to Bacillus anthracis pXO1.</title>
        <authorList>
            <person name="Rasko D.A."/>
            <person name="Ravel J."/>
            <person name="Oekstad O.A."/>
            <person name="Helgason E."/>
            <person name="Cer R.Z."/>
            <person name="Jiang L."/>
            <person name="Shores K.A."/>
            <person name="Fouts D.E."/>
            <person name="Tourasse N.J."/>
            <person name="Angiuoli S.V."/>
            <person name="Kolonay J.F."/>
            <person name="Nelson W.C."/>
            <person name="Kolstoe A.-B."/>
            <person name="Fraser C.M."/>
            <person name="Read T.D."/>
        </authorList>
    </citation>
    <scope>NUCLEOTIDE SEQUENCE [LARGE SCALE GENOMIC DNA]</scope>
    <source>
        <strain>ATCC 10987 / NRS 248</strain>
    </source>
</reference>
<evidence type="ECO:0000255" key="1">
    <source>
        <dbReference type="HAMAP-Rule" id="MF_00443"/>
    </source>
</evidence>
<feature type="chain" id="PRO_0000162780" description="Thiazole synthase">
    <location>
        <begin position="1"/>
        <end position="256"/>
    </location>
</feature>
<feature type="active site" description="Schiff-base intermediate with DXP" evidence="1">
    <location>
        <position position="96"/>
    </location>
</feature>
<feature type="binding site" evidence="1">
    <location>
        <position position="157"/>
    </location>
    <ligand>
        <name>1-deoxy-D-xylulose 5-phosphate</name>
        <dbReference type="ChEBI" id="CHEBI:57792"/>
    </ligand>
</feature>
<feature type="binding site" evidence="1">
    <location>
        <begin position="183"/>
        <end position="184"/>
    </location>
    <ligand>
        <name>1-deoxy-D-xylulose 5-phosphate</name>
        <dbReference type="ChEBI" id="CHEBI:57792"/>
    </ligand>
</feature>
<feature type="binding site" evidence="1">
    <location>
        <begin position="205"/>
        <end position="206"/>
    </location>
    <ligand>
        <name>1-deoxy-D-xylulose 5-phosphate</name>
        <dbReference type="ChEBI" id="CHEBI:57792"/>
    </ligand>
</feature>
<sequence>MLNIGPFSFHSRLLLGTGKFPDFDVQQKAIDVSEAEVLTFAVRRMDIFDAKQPNLLEKLDVKKYTLLPNTAGAKNAEEAVRIAKLAKASGLCDMIKVEVIGDDRTLLPDPVETLKASEMLLEEGFIVLPYTSDDVVLARKLQELGVHAIMPGASPIGSGLGIVNPLNLSFIIEQATVPVIVDAGIGSPADAAFAMELGADGVLLNTAVSGAKDPIKMAQAMKLSIEAGRLGFEAGRIGRKRCATASSPLEGMSVVE</sequence>
<keyword id="KW-0963">Cytoplasm</keyword>
<keyword id="KW-0704">Schiff base</keyword>
<keyword id="KW-0784">Thiamine biosynthesis</keyword>
<keyword id="KW-0808">Transferase</keyword>
<proteinExistence type="inferred from homology"/>
<organism>
    <name type="scientific">Bacillus cereus (strain ATCC 10987 / NRS 248)</name>
    <dbReference type="NCBI Taxonomy" id="222523"/>
    <lineage>
        <taxon>Bacteria</taxon>
        <taxon>Bacillati</taxon>
        <taxon>Bacillota</taxon>
        <taxon>Bacilli</taxon>
        <taxon>Bacillales</taxon>
        <taxon>Bacillaceae</taxon>
        <taxon>Bacillus</taxon>
        <taxon>Bacillus cereus group</taxon>
    </lineage>
</organism>